<name>GLYA_METKA</name>
<gene>
    <name evidence="1" type="primary">glyA</name>
    <name type="ordered locus">MK0122</name>
</gene>
<evidence type="ECO:0000255" key="1">
    <source>
        <dbReference type="HAMAP-Rule" id="MF_00051"/>
    </source>
</evidence>
<dbReference type="EC" id="2.1.2.-" evidence="1"/>
<dbReference type="EMBL" id="AE009439">
    <property type="protein sequence ID" value="AAM01339.1"/>
    <property type="molecule type" value="Genomic_DNA"/>
</dbReference>
<dbReference type="RefSeq" id="WP_011018494.1">
    <property type="nucleotide sequence ID" value="NC_003551.1"/>
</dbReference>
<dbReference type="SMR" id="Q8TZ19"/>
<dbReference type="FunCoup" id="Q8TZ19">
    <property type="interactions" value="305"/>
</dbReference>
<dbReference type="STRING" id="190192.MK0122"/>
<dbReference type="PaxDb" id="190192-MK0122"/>
<dbReference type="EnsemblBacteria" id="AAM01339">
    <property type="protein sequence ID" value="AAM01339"/>
    <property type="gene ID" value="MK0122"/>
</dbReference>
<dbReference type="GeneID" id="1477425"/>
<dbReference type="KEGG" id="mka:MK0122"/>
<dbReference type="PATRIC" id="fig|190192.8.peg.121"/>
<dbReference type="HOGENOM" id="CLU_022477_2_1_2"/>
<dbReference type="InParanoid" id="Q8TZ19"/>
<dbReference type="OrthoDB" id="5821at2157"/>
<dbReference type="UniPathway" id="UPA00288">
    <property type="reaction ID" value="UER01023"/>
</dbReference>
<dbReference type="Proteomes" id="UP000001826">
    <property type="component" value="Chromosome"/>
</dbReference>
<dbReference type="GO" id="GO:0005737">
    <property type="term" value="C:cytoplasm"/>
    <property type="evidence" value="ECO:0007669"/>
    <property type="project" value="UniProtKB-SubCell"/>
</dbReference>
<dbReference type="GO" id="GO:0004372">
    <property type="term" value="F:glycine hydroxymethyltransferase activity"/>
    <property type="evidence" value="ECO:0007669"/>
    <property type="project" value="UniProtKB-UniRule"/>
</dbReference>
<dbReference type="GO" id="GO:0030170">
    <property type="term" value="F:pyridoxal phosphate binding"/>
    <property type="evidence" value="ECO:0007669"/>
    <property type="project" value="UniProtKB-UniRule"/>
</dbReference>
<dbReference type="GO" id="GO:0019264">
    <property type="term" value="P:glycine biosynthetic process from serine"/>
    <property type="evidence" value="ECO:0007669"/>
    <property type="project" value="UniProtKB-UniRule"/>
</dbReference>
<dbReference type="GO" id="GO:0035999">
    <property type="term" value="P:tetrahydrofolate interconversion"/>
    <property type="evidence" value="ECO:0007669"/>
    <property type="project" value="InterPro"/>
</dbReference>
<dbReference type="CDD" id="cd00378">
    <property type="entry name" value="SHMT"/>
    <property type="match status" value="1"/>
</dbReference>
<dbReference type="FunFam" id="3.40.640.10:FF:000101">
    <property type="entry name" value="Serine hydroxymethyltransferase"/>
    <property type="match status" value="1"/>
</dbReference>
<dbReference type="Gene3D" id="3.90.1150.10">
    <property type="entry name" value="Aspartate Aminotransferase, domain 1"/>
    <property type="match status" value="1"/>
</dbReference>
<dbReference type="Gene3D" id="3.40.640.10">
    <property type="entry name" value="Type I PLP-dependent aspartate aminotransferase-like (Major domain)"/>
    <property type="match status" value="1"/>
</dbReference>
<dbReference type="HAMAP" id="MF_00051">
    <property type="entry name" value="SHMT"/>
    <property type="match status" value="1"/>
</dbReference>
<dbReference type="InterPro" id="IPR015424">
    <property type="entry name" value="PyrdxlP-dep_Trfase"/>
</dbReference>
<dbReference type="InterPro" id="IPR015421">
    <property type="entry name" value="PyrdxlP-dep_Trfase_major"/>
</dbReference>
<dbReference type="InterPro" id="IPR015422">
    <property type="entry name" value="PyrdxlP-dep_Trfase_small"/>
</dbReference>
<dbReference type="InterPro" id="IPR001085">
    <property type="entry name" value="Ser_HO-MeTrfase"/>
</dbReference>
<dbReference type="InterPro" id="IPR049943">
    <property type="entry name" value="Ser_HO-MeTrfase-like"/>
</dbReference>
<dbReference type="InterPro" id="IPR019798">
    <property type="entry name" value="Ser_HO-MeTrfase_PLP_BS"/>
</dbReference>
<dbReference type="InterPro" id="IPR039429">
    <property type="entry name" value="SHMT-like_dom"/>
</dbReference>
<dbReference type="NCBIfam" id="NF000586">
    <property type="entry name" value="PRK00011.1"/>
    <property type="match status" value="1"/>
</dbReference>
<dbReference type="PANTHER" id="PTHR11680">
    <property type="entry name" value="SERINE HYDROXYMETHYLTRANSFERASE"/>
    <property type="match status" value="1"/>
</dbReference>
<dbReference type="PANTHER" id="PTHR11680:SF35">
    <property type="entry name" value="SERINE HYDROXYMETHYLTRANSFERASE 1"/>
    <property type="match status" value="1"/>
</dbReference>
<dbReference type="Pfam" id="PF00464">
    <property type="entry name" value="SHMT"/>
    <property type="match status" value="1"/>
</dbReference>
<dbReference type="PIRSF" id="PIRSF000412">
    <property type="entry name" value="SHMT"/>
    <property type="match status" value="1"/>
</dbReference>
<dbReference type="SUPFAM" id="SSF53383">
    <property type="entry name" value="PLP-dependent transferases"/>
    <property type="match status" value="1"/>
</dbReference>
<dbReference type="PROSITE" id="PS00096">
    <property type="entry name" value="SHMT"/>
    <property type="match status" value="1"/>
</dbReference>
<protein>
    <recommendedName>
        <fullName evidence="1">Serine hydroxymethyltransferase</fullName>
        <shortName evidence="1">SHMT</shortName>
        <shortName evidence="1">Serine methylase</shortName>
        <ecNumber evidence="1">2.1.2.-</ecNumber>
    </recommendedName>
</protein>
<comment type="function">
    <text evidence="1">Catalyzes the reversible interconversion of serine and glycine with tetrahydromethanopterin (H4MPT) serving as the one-carbon carrier. Also exhibits a pteridine-independent aldolase activity toward beta-hydroxyamino acids, producing glycine and aldehydes, via a retro-aldol mechanism.</text>
</comment>
<comment type="catalytic activity">
    <reaction evidence="1">
        <text>5,10-methylenetetrahydromethanopterin + glycine + H2O = 5,6,7,8-tetrahydromethanopterin + L-serine</text>
        <dbReference type="Rhea" id="RHEA:47104"/>
        <dbReference type="ChEBI" id="CHEBI:15377"/>
        <dbReference type="ChEBI" id="CHEBI:33384"/>
        <dbReference type="ChEBI" id="CHEBI:57305"/>
        <dbReference type="ChEBI" id="CHEBI:57818"/>
        <dbReference type="ChEBI" id="CHEBI:58103"/>
    </reaction>
</comment>
<comment type="cofactor">
    <cofactor evidence="1">
        <name>pyridoxal 5'-phosphate</name>
        <dbReference type="ChEBI" id="CHEBI:597326"/>
    </cofactor>
</comment>
<comment type="pathway">
    <text evidence="1">Amino-acid biosynthesis; glycine biosynthesis; glycine from L-serine: step 1/1.</text>
</comment>
<comment type="subunit">
    <text evidence="1">Homodimer.</text>
</comment>
<comment type="subcellular location">
    <subcellularLocation>
        <location evidence="1">Cytoplasm</location>
    </subcellularLocation>
</comment>
<comment type="similarity">
    <text evidence="1">Belongs to the SHMT family.</text>
</comment>
<feature type="chain" id="PRO_0000113714" description="Serine hydroxymethyltransferase">
    <location>
        <begin position="1"/>
        <end position="428"/>
    </location>
</feature>
<feature type="binding site" evidence="1">
    <location>
        <begin position="120"/>
        <end position="122"/>
    </location>
    <ligand>
        <name>(6S)-5,6,7,8-tetrahydrofolate</name>
        <dbReference type="ChEBI" id="CHEBI:57453"/>
    </ligand>
</feature>
<feature type="site" description="Plays an important role in substrate specificity" evidence="1">
    <location>
        <position position="225"/>
    </location>
</feature>
<feature type="modified residue" description="N6-(pyridoxal phosphate)lysine" evidence="1">
    <location>
        <position position="226"/>
    </location>
</feature>
<organism>
    <name type="scientific">Methanopyrus kandleri (strain AV19 / DSM 6324 / JCM 9639 / NBRC 100938)</name>
    <dbReference type="NCBI Taxonomy" id="190192"/>
    <lineage>
        <taxon>Archaea</taxon>
        <taxon>Methanobacteriati</taxon>
        <taxon>Methanobacteriota</taxon>
        <taxon>Methanomada group</taxon>
        <taxon>Methanopyri</taxon>
        <taxon>Methanopyrales</taxon>
        <taxon>Methanopyraceae</taxon>
        <taxon>Methanopyrus</taxon>
    </lineage>
</organism>
<sequence>MFGLEDVHSVVRAVEKHHEWLKKCLPMIASENVTSPAVREMLVTDFGHRYAEGKPGERLYEGCEYIDEVELACVRLAKELFGAEHANVQPTSGVVANLAALFALTEPGDTILGLRISHGGHISHHDISAPGVRGLNVEYLPFDEEDMAIDVDGMVRKIEEVEPSVVMLGASLFLFPHPVEEAVEAVEAVGGYVVYDAAHVLGLIAGGQFQDPIREGAHVVTGSTHKTFPGPQGGIVLCQRDLADDIDEAVFPGLVSNHHLHHVAALAVALAEFKEYGERYARDTVRNAKALAEALYAEGLRVLCEHRGFTESHQIAVDVREQGGGAVIAEKLESANILCNKNLLPWDDESKSHDPSGIRLGTQELTRLGMGLSEMEYIAELIADVVLGRREPSEVRKDVEELRREFQEVKYGFGSGVGAHEWPRLADW</sequence>
<keyword id="KW-0028">Amino-acid biosynthesis</keyword>
<keyword id="KW-0963">Cytoplasm</keyword>
<keyword id="KW-0554">One-carbon metabolism</keyword>
<keyword id="KW-0663">Pyridoxal phosphate</keyword>
<keyword id="KW-1185">Reference proteome</keyword>
<keyword id="KW-0808">Transferase</keyword>
<proteinExistence type="inferred from homology"/>
<reference key="1">
    <citation type="journal article" date="2002" name="Proc. Natl. Acad. Sci. U.S.A.">
        <title>The complete genome of hyperthermophile Methanopyrus kandleri AV19 and monophyly of archaeal methanogens.</title>
        <authorList>
            <person name="Slesarev A.I."/>
            <person name="Mezhevaya K.V."/>
            <person name="Makarova K.S."/>
            <person name="Polushin N.N."/>
            <person name="Shcherbinina O.V."/>
            <person name="Shakhova V.V."/>
            <person name="Belova G.I."/>
            <person name="Aravind L."/>
            <person name="Natale D.A."/>
            <person name="Rogozin I.B."/>
            <person name="Tatusov R.L."/>
            <person name="Wolf Y.I."/>
            <person name="Stetter K.O."/>
            <person name="Malykh A.G."/>
            <person name="Koonin E.V."/>
            <person name="Kozyavkin S.A."/>
        </authorList>
    </citation>
    <scope>NUCLEOTIDE SEQUENCE [LARGE SCALE GENOMIC DNA]</scope>
    <source>
        <strain>AV19 / DSM 6324 / JCM 9639 / NBRC 100938</strain>
    </source>
</reference>
<accession>Q8TZ19</accession>